<keyword id="KW-0963">Cytoplasm</keyword>
<keyword id="KW-0251">Elongation factor</keyword>
<keyword id="KW-0648">Protein biosynthesis</keyword>
<proteinExistence type="inferred from homology"/>
<dbReference type="EMBL" id="BX571857">
    <property type="protein sequence ID" value="CAG43261.1"/>
    <property type="molecule type" value="Genomic_DNA"/>
</dbReference>
<dbReference type="RefSeq" id="WP_000626504.1">
    <property type="nucleotide sequence ID" value="NC_002953.3"/>
</dbReference>
<dbReference type="SMR" id="Q6G937"/>
<dbReference type="KEGG" id="sas:SAS1467"/>
<dbReference type="HOGENOM" id="CLU_074944_0_1_9"/>
<dbReference type="UniPathway" id="UPA00345"/>
<dbReference type="GO" id="GO:0005737">
    <property type="term" value="C:cytoplasm"/>
    <property type="evidence" value="ECO:0007669"/>
    <property type="project" value="UniProtKB-SubCell"/>
</dbReference>
<dbReference type="GO" id="GO:0003746">
    <property type="term" value="F:translation elongation factor activity"/>
    <property type="evidence" value="ECO:0007669"/>
    <property type="project" value="UniProtKB-UniRule"/>
</dbReference>
<dbReference type="GO" id="GO:0043043">
    <property type="term" value="P:peptide biosynthetic process"/>
    <property type="evidence" value="ECO:0007669"/>
    <property type="project" value="InterPro"/>
</dbReference>
<dbReference type="CDD" id="cd04470">
    <property type="entry name" value="S1_EF-P_repeat_1"/>
    <property type="match status" value="1"/>
</dbReference>
<dbReference type="CDD" id="cd05794">
    <property type="entry name" value="S1_EF-P_repeat_2"/>
    <property type="match status" value="1"/>
</dbReference>
<dbReference type="FunFam" id="2.30.30.30:FF:000010">
    <property type="entry name" value="Elongation factor P"/>
    <property type="match status" value="1"/>
</dbReference>
<dbReference type="FunFam" id="2.40.50.140:FF:000004">
    <property type="entry name" value="Elongation factor P"/>
    <property type="match status" value="1"/>
</dbReference>
<dbReference type="FunFam" id="2.40.50.140:FF:000009">
    <property type="entry name" value="Elongation factor P"/>
    <property type="match status" value="1"/>
</dbReference>
<dbReference type="Gene3D" id="2.30.30.30">
    <property type="match status" value="1"/>
</dbReference>
<dbReference type="Gene3D" id="2.40.50.140">
    <property type="entry name" value="Nucleic acid-binding proteins"/>
    <property type="match status" value="2"/>
</dbReference>
<dbReference type="HAMAP" id="MF_00141">
    <property type="entry name" value="EF_P"/>
    <property type="match status" value="1"/>
</dbReference>
<dbReference type="InterPro" id="IPR015365">
    <property type="entry name" value="Elong-fact-P_C"/>
</dbReference>
<dbReference type="InterPro" id="IPR012340">
    <property type="entry name" value="NA-bd_OB-fold"/>
</dbReference>
<dbReference type="InterPro" id="IPR014722">
    <property type="entry name" value="Rib_uL2_dom2"/>
</dbReference>
<dbReference type="InterPro" id="IPR020599">
    <property type="entry name" value="Transl_elong_fac_P/YeiP"/>
</dbReference>
<dbReference type="InterPro" id="IPR013185">
    <property type="entry name" value="Transl_elong_KOW-like"/>
</dbReference>
<dbReference type="InterPro" id="IPR001059">
    <property type="entry name" value="Transl_elong_P/YeiP_cen"/>
</dbReference>
<dbReference type="InterPro" id="IPR013852">
    <property type="entry name" value="Transl_elong_P/YeiP_CS"/>
</dbReference>
<dbReference type="InterPro" id="IPR011768">
    <property type="entry name" value="Transl_elongation_fac_P"/>
</dbReference>
<dbReference type="InterPro" id="IPR008991">
    <property type="entry name" value="Translation_prot_SH3-like_sf"/>
</dbReference>
<dbReference type="NCBIfam" id="TIGR00038">
    <property type="entry name" value="efp"/>
    <property type="match status" value="1"/>
</dbReference>
<dbReference type="NCBIfam" id="NF001810">
    <property type="entry name" value="PRK00529.1"/>
    <property type="match status" value="1"/>
</dbReference>
<dbReference type="PANTHER" id="PTHR30053">
    <property type="entry name" value="ELONGATION FACTOR P"/>
    <property type="match status" value="1"/>
</dbReference>
<dbReference type="PANTHER" id="PTHR30053:SF12">
    <property type="entry name" value="ELONGATION FACTOR P (EF-P) FAMILY PROTEIN"/>
    <property type="match status" value="1"/>
</dbReference>
<dbReference type="Pfam" id="PF01132">
    <property type="entry name" value="EFP"/>
    <property type="match status" value="1"/>
</dbReference>
<dbReference type="Pfam" id="PF08207">
    <property type="entry name" value="EFP_N"/>
    <property type="match status" value="1"/>
</dbReference>
<dbReference type="Pfam" id="PF09285">
    <property type="entry name" value="Elong-fact-P_C"/>
    <property type="match status" value="1"/>
</dbReference>
<dbReference type="PIRSF" id="PIRSF005901">
    <property type="entry name" value="EF-P"/>
    <property type="match status" value="1"/>
</dbReference>
<dbReference type="SMART" id="SM01185">
    <property type="entry name" value="EFP"/>
    <property type="match status" value="1"/>
</dbReference>
<dbReference type="SMART" id="SM00841">
    <property type="entry name" value="Elong-fact-P_C"/>
    <property type="match status" value="1"/>
</dbReference>
<dbReference type="SUPFAM" id="SSF50249">
    <property type="entry name" value="Nucleic acid-binding proteins"/>
    <property type="match status" value="2"/>
</dbReference>
<dbReference type="SUPFAM" id="SSF50104">
    <property type="entry name" value="Translation proteins SH3-like domain"/>
    <property type="match status" value="1"/>
</dbReference>
<dbReference type="PROSITE" id="PS01275">
    <property type="entry name" value="EFP"/>
    <property type="match status" value="1"/>
</dbReference>
<comment type="function">
    <text evidence="1">Involved in peptide bond synthesis. Stimulates efficient translation and peptide-bond synthesis on native or reconstituted 70S ribosomes in vitro. Probably functions indirectly by altering the affinity of the ribosome for aminoacyl-tRNA, thus increasing their reactivity as acceptors for peptidyl transferase.</text>
</comment>
<comment type="pathway">
    <text evidence="1">Protein biosynthesis; polypeptide chain elongation.</text>
</comment>
<comment type="subcellular location">
    <subcellularLocation>
        <location evidence="1">Cytoplasm</location>
    </subcellularLocation>
</comment>
<comment type="similarity">
    <text evidence="1">Belongs to the elongation factor P family.</text>
</comment>
<reference key="1">
    <citation type="journal article" date="2004" name="Proc. Natl. Acad. Sci. U.S.A.">
        <title>Complete genomes of two clinical Staphylococcus aureus strains: evidence for the rapid evolution of virulence and drug resistance.</title>
        <authorList>
            <person name="Holden M.T.G."/>
            <person name="Feil E.J."/>
            <person name="Lindsay J.A."/>
            <person name="Peacock S.J."/>
            <person name="Day N.P.J."/>
            <person name="Enright M.C."/>
            <person name="Foster T.J."/>
            <person name="Moore C.E."/>
            <person name="Hurst L."/>
            <person name="Atkin R."/>
            <person name="Barron A."/>
            <person name="Bason N."/>
            <person name="Bentley S.D."/>
            <person name="Chillingworth C."/>
            <person name="Chillingworth T."/>
            <person name="Churcher C."/>
            <person name="Clark L."/>
            <person name="Corton C."/>
            <person name="Cronin A."/>
            <person name="Doggett J."/>
            <person name="Dowd L."/>
            <person name="Feltwell T."/>
            <person name="Hance Z."/>
            <person name="Harris B."/>
            <person name="Hauser H."/>
            <person name="Holroyd S."/>
            <person name="Jagels K."/>
            <person name="James K.D."/>
            <person name="Lennard N."/>
            <person name="Line A."/>
            <person name="Mayes R."/>
            <person name="Moule S."/>
            <person name="Mungall K."/>
            <person name="Ormond D."/>
            <person name="Quail M.A."/>
            <person name="Rabbinowitsch E."/>
            <person name="Rutherford K.M."/>
            <person name="Sanders M."/>
            <person name="Sharp S."/>
            <person name="Simmonds M."/>
            <person name="Stevens K."/>
            <person name="Whitehead S."/>
            <person name="Barrell B.G."/>
            <person name="Spratt B.G."/>
            <person name="Parkhill J."/>
        </authorList>
    </citation>
    <scope>NUCLEOTIDE SEQUENCE [LARGE SCALE GENOMIC DNA]</scope>
    <source>
        <strain>MSSA476</strain>
    </source>
</reference>
<name>EFP_STAAS</name>
<gene>
    <name evidence="1" type="primary">efp</name>
    <name type="ordered locus">SAS1467</name>
</gene>
<organism>
    <name type="scientific">Staphylococcus aureus (strain MSSA476)</name>
    <dbReference type="NCBI Taxonomy" id="282459"/>
    <lineage>
        <taxon>Bacteria</taxon>
        <taxon>Bacillati</taxon>
        <taxon>Bacillota</taxon>
        <taxon>Bacilli</taxon>
        <taxon>Bacillales</taxon>
        <taxon>Staphylococcaceae</taxon>
        <taxon>Staphylococcus</taxon>
    </lineage>
</organism>
<sequence>MISVNDFKTGLTISVDNAIWKVIDFQHVKPGKGSAFVRSKLRNLRTGAIQEKTFRAGEKVEPAMIENRRMQYLYADGDNHVFMDNESFEQTELSSDYLKEELNYLKEGMEVQIQTYEGETIGVELPKTVELTVTETEPGIKGDTATGATKSATVETGYTLNVPLFVNEGDVLIINTGDGSYISRG</sequence>
<feature type="chain" id="PRO_0000094332" description="Elongation factor P">
    <location>
        <begin position="1"/>
        <end position="185"/>
    </location>
</feature>
<evidence type="ECO:0000255" key="1">
    <source>
        <dbReference type="HAMAP-Rule" id="MF_00141"/>
    </source>
</evidence>
<protein>
    <recommendedName>
        <fullName evidence="1">Elongation factor P</fullName>
        <shortName evidence="1">EF-P</shortName>
    </recommendedName>
</protein>
<accession>Q6G937</accession>